<keyword id="KW-0010">Activator</keyword>
<keyword id="KW-0025">Alternative splicing</keyword>
<keyword id="KW-0238">DNA-binding</keyword>
<keyword id="KW-0371">Homeobox</keyword>
<keyword id="KW-0539">Nucleus</keyword>
<keyword id="KW-1185">Reference proteome</keyword>
<keyword id="KW-0804">Transcription</keyword>
<keyword id="KW-0805">Transcription regulation</keyword>
<evidence type="ECO:0000250" key="1">
    <source>
        <dbReference type="UniProtKB" id="P28069"/>
    </source>
</evidence>
<evidence type="ECO:0000255" key="2">
    <source>
        <dbReference type="PROSITE-ProRule" id="PRU00108"/>
    </source>
</evidence>
<evidence type="ECO:0000255" key="3">
    <source>
        <dbReference type="PROSITE-ProRule" id="PRU00530"/>
    </source>
</evidence>
<evidence type="ECO:0000305" key="4"/>
<accession>Q05749</accession>
<proteinExistence type="evidence at transcript level"/>
<name>PIT1_MELGA</name>
<reference key="1">
    <citation type="journal article" date="1992" name="DNA Cell Biol.">
        <title>Complementary DNA cloning and expression of Pit-1/GHF-1 from the domestic turkey.</title>
        <authorList>
            <person name="Wong E.A."/>
            <person name="Silsby J.L."/>
            <person name="el Halawani M.E."/>
        </authorList>
    </citation>
    <scope>NUCLEOTIDE SEQUENCE [MRNA]</scope>
    <source>
        <tissue>Pituitary</tissue>
    </source>
</reference>
<reference key="2">
    <citation type="submission" date="1995-01" db="EMBL/GenBank/DDBJ databases">
        <authorList>
            <person name="Wong E.A."/>
            <person name="Sharova L."/>
            <person name="Kurima K."/>
            <person name="Weatherly K.L."/>
        </authorList>
    </citation>
    <scope>SEQUENCE REVISION</scope>
    <scope>ALTERNATIVE SPLICING</scope>
</reference>
<comment type="function">
    <text evidence="1">Transcription factor that activates growth hormone and prolactin genes. Specifically binds to the consensus sequence 5'-TAAAT-3'.</text>
</comment>
<comment type="subcellular location">
    <subcellularLocation>
        <location evidence="1">Nucleus</location>
    </subcellularLocation>
</comment>
<comment type="alternative products">
    <event type="alternative splicing"/>
    <isoform>
        <id>Q05749-1</id>
        <name>PIT-1beta*</name>
        <sequence type="displayed"/>
    </isoform>
    <isoform>
        <id>Q05749-2</id>
        <name>PIT-1</name>
        <sequence type="described" ref="VSP_002318"/>
    </isoform>
    <isoform>
        <id>Q05749-3</id>
        <name>PIT-1*</name>
        <sequence type="described" ref="VSP_002319"/>
    </isoform>
</comment>
<comment type="tissue specificity">
    <text>Pituitary gland.</text>
</comment>
<comment type="domain">
    <text evidence="1">The 9aaTAD motif is a transactivation domain present in a large number of yeast and animal transcription factors.</text>
</comment>
<comment type="similarity">
    <text evidence="4">Belongs to the POU transcription factor family. Class-1 subfamily.</text>
</comment>
<feature type="chain" id="PRO_0000100704" description="Pituitary-specific positive transcription factor 1">
    <location>
        <begin position="1"/>
        <end position="370"/>
    </location>
</feature>
<feature type="domain" description="POU-specific" evidence="3">
    <location>
        <begin position="202"/>
        <end position="276"/>
    </location>
</feature>
<feature type="DNA-binding region" description="Homeobox" evidence="2">
    <location>
        <begin position="292"/>
        <end position="351"/>
    </location>
</feature>
<feature type="short sequence motif" description="9aaTAD" evidence="1">
    <location>
        <begin position="5"/>
        <end position="13"/>
    </location>
</feature>
<feature type="splice variant" id="VSP_002318" description="In isoform PIT-1." evidence="4">
    <original>MTCQAFASSDNFVPLNSDSSPSLPLIMHHSAAECLPVSNHATSVVST</original>
    <variation>MYLESSCVFLP</variation>
    <location>
        <begin position="1"/>
        <end position="47"/>
    </location>
</feature>
<feature type="splice variant" id="VSP_002319" description="In isoform PIT-1*." evidence="4">
    <location>
        <begin position="48"/>
        <end position="75"/>
    </location>
</feature>
<dbReference type="EMBL" id="U18928">
    <property type="protein sequence ID" value="AAB04690.1"/>
    <property type="molecule type" value="Genomic_DNA"/>
</dbReference>
<dbReference type="EMBL" id="U62732">
    <property type="protein sequence ID" value="AAB04690.1"/>
    <property type="status" value="JOINED"/>
    <property type="molecule type" value="Genomic_DNA"/>
</dbReference>
<dbReference type="EMBL" id="U18923">
    <property type="protein sequence ID" value="AAB04690.1"/>
    <property type="status" value="JOINED"/>
    <property type="molecule type" value="Genomic_DNA"/>
</dbReference>
<dbReference type="EMBL" id="U18924">
    <property type="protein sequence ID" value="AAB04690.1"/>
    <property type="status" value="JOINED"/>
    <property type="molecule type" value="Genomic_DNA"/>
</dbReference>
<dbReference type="EMBL" id="U18925">
    <property type="protein sequence ID" value="AAB04690.1"/>
    <property type="status" value="JOINED"/>
    <property type="molecule type" value="Genomic_DNA"/>
</dbReference>
<dbReference type="EMBL" id="U18926">
    <property type="protein sequence ID" value="AAB04690.1"/>
    <property type="status" value="JOINED"/>
    <property type="molecule type" value="Genomic_DNA"/>
</dbReference>
<dbReference type="EMBL" id="U18927">
    <property type="protein sequence ID" value="AAB04690.1"/>
    <property type="status" value="JOINED"/>
    <property type="molecule type" value="Genomic_DNA"/>
</dbReference>
<dbReference type="EMBL" id="U18928">
    <property type="protein sequence ID" value="AAB04691.1"/>
    <property type="molecule type" value="Genomic_DNA"/>
</dbReference>
<dbReference type="EMBL" id="U62732">
    <property type="protein sequence ID" value="AAB04691.1"/>
    <property type="status" value="JOINED"/>
    <property type="molecule type" value="Genomic_DNA"/>
</dbReference>
<dbReference type="EMBL" id="U18923">
    <property type="protein sequence ID" value="AAB04691.1"/>
    <property type="status" value="JOINED"/>
    <property type="molecule type" value="Genomic_DNA"/>
</dbReference>
<dbReference type="EMBL" id="U18924">
    <property type="protein sequence ID" value="AAB04691.1"/>
    <property type="status" value="JOINED"/>
    <property type="molecule type" value="Genomic_DNA"/>
</dbReference>
<dbReference type="EMBL" id="U18925">
    <property type="protein sequence ID" value="AAB04691.1"/>
    <property type="status" value="JOINED"/>
    <property type="molecule type" value="Genomic_DNA"/>
</dbReference>
<dbReference type="EMBL" id="U18926">
    <property type="protein sequence ID" value="AAB04691.1"/>
    <property type="status" value="JOINED"/>
    <property type="molecule type" value="Genomic_DNA"/>
</dbReference>
<dbReference type="EMBL" id="U18927">
    <property type="protein sequence ID" value="AAB04691.1"/>
    <property type="status" value="JOINED"/>
    <property type="molecule type" value="Genomic_DNA"/>
</dbReference>
<dbReference type="EMBL" id="U18928">
    <property type="protein sequence ID" value="AAB04692.1"/>
    <property type="molecule type" value="Genomic_DNA"/>
</dbReference>
<dbReference type="EMBL" id="U18923">
    <property type="protein sequence ID" value="AAB04692.1"/>
    <property type="status" value="JOINED"/>
    <property type="molecule type" value="Genomic_DNA"/>
</dbReference>
<dbReference type="EMBL" id="U18924">
    <property type="protein sequence ID" value="AAB04692.1"/>
    <property type="status" value="JOINED"/>
    <property type="molecule type" value="Genomic_DNA"/>
</dbReference>
<dbReference type="EMBL" id="U18925">
    <property type="protein sequence ID" value="AAB04692.1"/>
    <property type="status" value="JOINED"/>
    <property type="molecule type" value="Genomic_DNA"/>
</dbReference>
<dbReference type="EMBL" id="U18926">
    <property type="protein sequence ID" value="AAB04692.1"/>
    <property type="status" value="JOINED"/>
    <property type="molecule type" value="Genomic_DNA"/>
</dbReference>
<dbReference type="EMBL" id="U18927">
    <property type="protein sequence ID" value="AAB04692.1"/>
    <property type="status" value="JOINED"/>
    <property type="molecule type" value="Genomic_DNA"/>
</dbReference>
<dbReference type="EMBL" id="X69471">
    <property type="protein sequence ID" value="CAA49229.1"/>
    <property type="status" value="ALT_SEQ"/>
    <property type="molecule type" value="mRNA"/>
</dbReference>
<dbReference type="PIR" id="S26693">
    <property type="entry name" value="S26693"/>
</dbReference>
<dbReference type="RefSeq" id="NP_001290151.1">
    <property type="nucleotide sequence ID" value="NM_001303222.1"/>
</dbReference>
<dbReference type="SMR" id="Q05749"/>
<dbReference type="FunCoup" id="Q05749">
    <property type="interactions" value="7"/>
</dbReference>
<dbReference type="GeneID" id="100151749"/>
<dbReference type="KEGG" id="mgp:100151749"/>
<dbReference type="CTD" id="5449"/>
<dbReference type="InParanoid" id="Q05749"/>
<dbReference type="OrthoDB" id="10053at1549675"/>
<dbReference type="Proteomes" id="UP000001645">
    <property type="component" value="Unplaced"/>
</dbReference>
<dbReference type="GO" id="GO:0005634">
    <property type="term" value="C:nucleus"/>
    <property type="evidence" value="ECO:0000250"/>
    <property type="project" value="UniProtKB"/>
</dbReference>
<dbReference type="GO" id="GO:0000981">
    <property type="term" value="F:DNA-binding transcription factor activity, RNA polymerase II-specific"/>
    <property type="evidence" value="ECO:0000250"/>
    <property type="project" value="UniProtKB"/>
</dbReference>
<dbReference type="GO" id="GO:0000978">
    <property type="term" value="F:RNA polymerase II cis-regulatory region sequence-specific DNA binding"/>
    <property type="evidence" value="ECO:0007669"/>
    <property type="project" value="TreeGrafter"/>
</dbReference>
<dbReference type="GO" id="GO:0045944">
    <property type="term" value="P:positive regulation of transcription by RNA polymerase II"/>
    <property type="evidence" value="ECO:0000250"/>
    <property type="project" value="UniProtKB"/>
</dbReference>
<dbReference type="CDD" id="cd00086">
    <property type="entry name" value="homeodomain"/>
    <property type="match status" value="1"/>
</dbReference>
<dbReference type="FunFam" id="1.10.10.60:FF:000150">
    <property type="entry name" value="POU domain protein"/>
    <property type="match status" value="1"/>
</dbReference>
<dbReference type="FunFam" id="1.10.260.40:FF:000007">
    <property type="entry name" value="POU domain protein"/>
    <property type="match status" value="1"/>
</dbReference>
<dbReference type="Gene3D" id="1.10.10.60">
    <property type="entry name" value="Homeodomain-like"/>
    <property type="match status" value="1"/>
</dbReference>
<dbReference type="Gene3D" id="1.10.260.40">
    <property type="entry name" value="lambda repressor-like DNA-binding domains"/>
    <property type="match status" value="1"/>
</dbReference>
<dbReference type="InterPro" id="IPR001356">
    <property type="entry name" value="HD"/>
</dbReference>
<dbReference type="InterPro" id="IPR017970">
    <property type="entry name" value="Homeobox_CS"/>
</dbReference>
<dbReference type="InterPro" id="IPR009057">
    <property type="entry name" value="Homeodomain-like_sf"/>
</dbReference>
<dbReference type="InterPro" id="IPR010982">
    <property type="entry name" value="Lambda_DNA-bd_dom_sf"/>
</dbReference>
<dbReference type="InterPro" id="IPR013847">
    <property type="entry name" value="POU"/>
</dbReference>
<dbReference type="InterPro" id="IPR000327">
    <property type="entry name" value="POU_dom"/>
</dbReference>
<dbReference type="InterPro" id="IPR050255">
    <property type="entry name" value="POU_domain_TF"/>
</dbReference>
<dbReference type="PANTHER" id="PTHR11636:SF84">
    <property type="entry name" value="NETRIN-1-RELATED"/>
    <property type="match status" value="1"/>
</dbReference>
<dbReference type="PANTHER" id="PTHR11636">
    <property type="entry name" value="POU DOMAIN"/>
    <property type="match status" value="1"/>
</dbReference>
<dbReference type="Pfam" id="PF00046">
    <property type="entry name" value="Homeodomain"/>
    <property type="match status" value="1"/>
</dbReference>
<dbReference type="Pfam" id="PF00157">
    <property type="entry name" value="Pou"/>
    <property type="match status" value="1"/>
</dbReference>
<dbReference type="PRINTS" id="PR00028">
    <property type="entry name" value="POUDOMAIN"/>
</dbReference>
<dbReference type="SMART" id="SM00389">
    <property type="entry name" value="HOX"/>
    <property type="match status" value="1"/>
</dbReference>
<dbReference type="SMART" id="SM00352">
    <property type="entry name" value="POU"/>
    <property type="match status" value="1"/>
</dbReference>
<dbReference type="SUPFAM" id="SSF46689">
    <property type="entry name" value="Homeodomain-like"/>
    <property type="match status" value="1"/>
</dbReference>
<dbReference type="SUPFAM" id="SSF47413">
    <property type="entry name" value="lambda repressor-like DNA-binding domains"/>
    <property type="match status" value="1"/>
</dbReference>
<dbReference type="PROSITE" id="PS00027">
    <property type="entry name" value="HOMEOBOX_1"/>
    <property type="match status" value="1"/>
</dbReference>
<dbReference type="PROSITE" id="PS50071">
    <property type="entry name" value="HOMEOBOX_2"/>
    <property type="match status" value="1"/>
</dbReference>
<dbReference type="PROSITE" id="PS00035">
    <property type="entry name" value="POU_1"/>
    <property type="match status" value="1"/>
</dbReference>
<dbReference type="PROSITE" id="PS00465">
    <property type="entry name" value="POU_2"/>
    <property type="match status" value="1"/>
</dbReference>
<dbReference type="PROSITE" id="PS51179">
    <property type="entry name" value="POU_3"/>
    <property type="match status" value="1"/>
</dbReference>
<protein>
    <recommendedName>
        <fullName>Pituitary-specific positive transcription factor 1</fullName>
        <shortName>PIT-1</shortName>
    </recommendedName>
    <alternativeName>
        <fullName>Growth hormone factor 1</fullName>
        <shortName>GHF-1</shortName>
    </alternativeName>
</protein>
<organism>
    <name type="scientific">Meleagris gallopavo</name>
    <name type="common">Wild turkey</name>
    <dbReference type="NCBI Taxonomy" id="9103"/>
    <lineage>
        <taxon>Eukaryota</taxon>
        <taxon>Metazoa</taxon>
        <taxon>Chordata</taxon>
        <taxon>Craniata</taxon>
        <taxon>Vertebrata</taxon>
        <taxon>Euteleostomi</taxon>
        <taxon>Archelosauria</taxon>
        <taxon>Archosauria</taxon>
        <taxon>Dinosauria</taxon>
        <taxon>Saurischia</taxon>
        <taxon>Theropoda</taxon>
        <taxon>Coelurosauria</taxon>
        <taxon>Aves</taxon>
        <taxon>Neognathae</taxon>
        <taxon>Galloanserae</taxon>
        <taxon>Galliformes</taxon>
        <taxon>Phasianidae</taxon>
        <taxon>Meleagridinae</taxon>
        <taxon>Meleagris</taxon>
    </lineage>
</organism>
<gene>
    <name type="primary">POU1F1</name>
    <name type="synonym">PIT1</name>
</gene>
<sequence>MTCQAFASSDNFVPLNSDSSPSLPLIMHHSAAECLPVSNHATSVVSTVPSVLSLIQTPKCSHLHFAMMTSGNVSAGLHYSVPSCHYGNQTSTYGVMTGIKPATPEMLSASLSQSRILQTCSMPHPNVVNGVSTLQSKSFSFSCSLTPCLYKFPEHALSASSCALGHSFTPMHQTLLSDDPTAADFKQEFRRKSKSVEEPVDMDSPEIRELEKFANEFKLRRIKLGYTQTNVGEALAAVHGSEFSQTTICRFENSQLSFKNACKLKSILSKWLEEAEQVGALYNEKVGVNERKRKRRTTISIAAKEALERHFGEQSKPSSQEIMRMAEGLNLEKEVVRVWFCNRRQREKRVKTSLHQNAFSSIIKEHHECR</sequence>